<protein>
    <recommendedName>
        <fullName evidence="13">Laminin subunit alpha lam-3</fullName>
    </recommendedName>
    <alternativeName>
        <fullName evidence="11">Laminin alphaA</fullName>
    </alternativeName>
</protein>
<sequence length="3102" mass="343793">MRLWLGLLAVSNIALGGWNTSEDASIWENYVEDSNYHEFISSESERGLFPNIFNLATNSLITATDTCGQYTAEEYCKLVEHVLLRKTTNTQSPQCDICDANNVHKRHPIEYAIDGTRRWWQSPSLANGLRFEKVNITIDLRQEYQVAYIILKMGNSPRPGTWVLEKSLDGEYYEPWQYYAMQDAECMRQFGIPATTGVPRFQKEDEVHCTSEYSKITPLENGEIHTSLVNGRPGAENTSLELQKFTRARFVRLRLISPRTLNADLMIINKKSDSLDKSVTMRYFYSISDISIGGQCICYGHAESCPSDPVTGQFKCECRHNTCGESCNRCCPLFNQLPWKPGTNSHPNVCQQCQCFNHAHSCVYDDELDRNKWSITPEGVYEGGGRCLECAHNTEGFNCERCKDGYYRPSGLSHYREDACRTCECDPVGSVSDACVRDDQSAENGQKPGDCICKPGFGGRRCERCAPGYRNHPTCEPCPCNRAGSVNFDTCDGASCQCKANVEGIYCDRCKAGTIHLSASNPLGCQPCFCFGHSSTCTQGKWNKAQIINNIGWHLTDLTGGKDVKPEVENGEVLMFNANQNQDRSLYYWKAPDSFKGNMLNSYGGYLHYDVYYVPTEQGATVFVADVAIEGNGIKIEYHSRIEFLPREKMTVAIPMSELSGWYNAEARSPVDKADMMRALANVDRFTVRATYHQPQLQSSIFGLSLDTAVPAPDEIVEEDTSLKALAYHTQDTLMGGVEVCECPENFAGNSCESCVPGYRRVNNQLYGGRCEKCDCHGNSEECDPFTGECLNCRHNTTGSRCELCKPGHVGNPSRGGELGACEQCECPSLDLNPNPECISTELAVLGSVASNEDNYVCINCPLGYEGNKCEYCSDGFFEDPLTGKCIECTCNGNIDPMGIGNCDSETGKCLKCIGHTTGDSCESCKEHHWGNAQLHTCKPCGCHTQGAVNPQCSEENGECECKENYIGAQCDRCKENHGDVENGCPACDCNDTGSIGSDCDQVSGQCNCKQGVFGKQCDQCRPSYFNFTDAGCQFCHCNIYGSIEDGKCDQTTGKCECRENVEGTMCEKCADGYFNITSGDGCEDCGCDPTGSEDVSCNLVTGQCVCKPGVTGLKCDSCLPNFYGLTSEGCTECEPCPAPGQVCDPIDGSCVCPPNTVGEMCENCTTNAWDYHPLNGCKLCDCSDIGSDGGMCNTFTGQCKCKAAYVGLKCDLCTHGFFNFPTCEPCGCNAAGTDPLQCKDGQCLCNEIGECPCKKNVHGTKCDQCGEGTFSLDSSNLKGCTECFCFNRTSNCEQSDLVWQQMYAEDRRAVFQEPWEFYTKKHNINLLREKPSHFNSYPTDATPLYWPLPSTMLGDRTASYNGFLRFKIWNEDNRRGLHGIRPDQQYFRHFPQVIIFGNNRIELEHIPMEINDDGIYKIRLHESEWRVRHSPELTLTRKQMMVALQDTQGIYIRGTYTYPARGDAINIQEVSLDVAVPESKIVAGLSTTKAIGVEKCLGCPQGYTGLSCQNPEVGYYRKKHREYLNQADDIALIGWSEPCSCHGHSQTCNPDTSVCTDCEHNTFGDFCEHCLPGYIGDAREGGANACTKCACPLVENSFSDSCVAVDHGRGYVCNSCKPGYTGQYCETCVAGYYGDPQHIGGTCSPCDCHPDGSLHGACNPLSGQCECKPGVTGRTCSMCQERHAFINRVCTSCDQGCYLPLMETMDTMEEHLGRQNFSGLKPIPWKRVWRIGNESQDLSTFVGGIDKDGEIVKDSKWAKDAFALLDEVNFQMGRSNKSAVSIKQFTGIAEQLILDAQIHYANAFNTTNFLKMFAEHGATTVGGAALDGMLMEAEAHLNATVERGEYVEKRLNRAQQEHKKAEELLKMVTAQKLNETIFEDLKNRIDVLEQWMNDYRETIYDVSKKDTADAERMSLVVGKRINRYKEVSNEIEKLRVEAEDQIAYSRNSIEKARSEELMNMFEDKEKINMTLAELPDLVEQCQNITLLYSQLIDEYDEEYVQTAGRHAEKLEVQAQKIVDRFVDTRTETENPLKASHAYENIVEALKNATEAVDSAAEASEAVSKMLGSEGSESGDANEESLRSQLEKLKNESSLSNVDNSNAVKIVEELKKEKKDLTDRLGHLNELKTSIVKRLGVIKNEASSWDDKHDRMHSILKNGAKTAHERSANVKKESEGIKTEVSAIKAEVEKLMNSTSSGVQEDMEKIRASRTGMEYGAQKLTKVNKLSTANQGRTDKMARNIAILKAKIEQAREKAYQIRLSLNSGERGLCKRSYISPASPSPVNTFHVSYRPLQQVSDAVILVSKTKGRRTQPSEHLAVEIRDKRVVVHWDIGSGKKMITNSHPINYVPSNDRVTWYHIDVLRIGNAVNLTVALKESYDGGFKPRGAPVSVFVGNSKDDNSIFNTIPGETTIDVGTDETVASDIGLTTHKFSGIVGGLRIDEVPLPLWSFESTTGECEGATSPPKTSQRGHLFRDGFANVSMSVSERTMSAITVIFNAFSPNGLLYFRGSEASGDFVAIYLNDGKVMFKINLGGGSVAELTSQNVYNDGKEHTVKAIRTGSEMYLQVDSDADRFNTVITGENTALNIENENHYVAGVPMTLNKEVFGDINWNGFIGCILTVKPSQVGELDLDHPEHSQGKTDGCSQVSGVTDKIIGFPKPGYLITKGISIDNSSTFAFSFRTREENGTLVYQSSKLQKVSKRDSEDDGKGYIAFYLFRGYLVLHFGKDASSRKEVVTFRSSHPYNDGQVHAVFMERNGKIISVKVDDKEIGDSQSLSDETSVGTTSGRLILGGFSDDLKPPNNEIPITSFFIGCISDVFLNMKRVSLAPEKHNAQIGMCSMDDTQGLSPIDDPIDGNGHNGHRKSSKLSFEATNRNYYEVSTQSSHLVMNPNGEETVEKTCETSLGSLQGAVRYGLSKSSHSRINFEAPYPNITDFTVKLSLQTETSNGMIWAWANYKNYTRYIFLDIIDGFATLEVKGHKQPKILKHLGNRINDGQWHDITVEKKNRSLKLIIDSLGPVEMTDCPTPKVMKKRVYVGGVISRHRRQFGLTTPGLDGCIRDFEMNNRIFNNLDEPSTSKNVMPCAKACKLKRSSKRKRNSKN</sequence>
<keyword id="KW-0084">Basement membrane</keyword>
<keyword id="KW-1015">Disulfide bond</keyword>
<keyword id="KW-0272">Extracellular matrix</keyword>
<keyword id="KW-0325">Glycoprotein</keyword>
<keyword id="KW-0424">Laminin EGF-like domain</keyword>
<keyword id="KW-1185">Reference proteome</keyword>
<keyword id="KW-0677">Repeat</keyword>
<keyword id="KW-0964">Secreted</keyword>
<keyword id="KW-0732">Signal</keyword>
<name>LAM3_CAEEL</name>
<organism evidence="16">
    <name type="scientific">Caenorhabditis elegans</name>
    <dbReference type="NCBI Taxonomy" id="6239"/>
    <lineage>
        <taxon>Eukaryota</taxon>
        <taxon>Metazoa</taxon>
        <taxon>Ecdysozoa</taxon>
        <taxon>Nematoda</taxon>
        <taxon>Chromadorea</taxon>
        <taxon>Rhabditida</taxon>
        <taxon>Rhabditina</taxon>
        <taxon>Rhabditomorpha</taxon>
        <taxon>Rhabditoidea</taxon>
        <taxon>Rhabditidae</taxon>
        <taxon>Peloderinae</taxon>
        <taxon>Caenorhabditis</taxon>
    </lineage>
</organism>
<evidence type="ECO:0000250" key="1">
    <source>
        <dbReference type="UniProtKB" id="P25391"/>
    </source>
</evidence>
<evidence type="ECO:0000255" key="2"/>
<evidence type="ECO:0000255" key="3">
    <source>
        <dbReference type="PROSITE-ProRule" id="PRU00122"/>
    </source>
</evidence>
<evidence type="ECO:0000255" key="4">
    <source>
        <dbReference type="PROSITE-ProRule" id="PRU00458"/>
    </source>
</evidence>
<evidence type="ECO:0000255" key="5">
    <source>
        <dbReference type="PROSITE-ProRule" id="PRU00460"/>
    </source>
</evidence>
<evidence type="ECO:0000255" key="6">
    <source>
        <dbReference type="PROSITE-ProRule" id="PRU00466"/>
    </source>
</evidence>
<evidence type="ECO:0000255" key="7">
    <source>
        <dbReference type="PROSITE-ProRule" id="PRU00498"/>
    </source>
</evidence>
<evidence type="ECO:0000256" key="8">
    <source>
        <dbReference type="SAM" id="MobiDB-lite"/>
    </source>
</evidence>
<evidence type="ECO:0000269" key="9">
    <source>
    </source>
</evidence>
<evidence type="ECO:0000269" key="10">
    <source>
    </source>
</evidence>
<evidence type="ECO:0000303" key="11">
    <source>
    </source>
</evidence>
<evidence type="ECO:0000305" key="12"/>
<evidence type="ECO:0000305" key="13">
    <source>
    </source>
</evidence>
<evidence type="ECO:0000312" key="14">
    <source>
        <dbReference type="EMBL" id="AAC26793.1"/>
    </source>
</evidence>
<evidence type="ECO:0000312" key="15">
    <source>
        <dbReference type="EMBL" id="CAB03385.3"/>
    </source>
</evidence>
<evidence type="ECO:0000312" key="16">
    <source>
        <dbReference type="Proteomes" id="UP000001940"/>
    </source>
</evidence>
<evidence type="ECO:0000312" key="17">
    <source>
        <dbReference type="WormBase" id="T22A3.8"/>
    </source>
</evidence>
<proteinExistence type="evidence at protein level"/>
<accession>G5ECE3</accession>
<reference evidence="16" key="1">
    <citation type="journal article" date="1998" name="Science">
        <title>Genome sequence of the nematode C. elegans: a platform for investigating biology.</title>
        <authorList>
            <consortium name="The C. elegans sequencing consortium"/>
        </authorList>
    </citation>
    <scope>NUCLEOTIDE SEQUENCE [LARGE SCALE GENOMIC DNA]</scope>
    <source>
        <strain evidence="16">Bristol N2</strain>
    </source>
</reference>
<reference evidence="14" key="2">
    <citation type="journal article" date="2003" name="Development">
        <title>Laminin alpha subunits and their role in C. elegans development.</title>
        <authorList>
            <person name="Huang C.C."/>
            <person name="Hall D.H."/>
            <person name="Hedgecock E.M."/>
            <person name="Kao G."/>
            <person name="Karantza V."/>
            <person name="Vogel B.E."/>
            <person name="Hutter H."/>
            <person name="Chisholm A.D."/>
            <person name="Yurchenco P.D."/>
            <person name="Wadsworth W.G."/>
        </authorList>
    </citation>
    <scope>NUCLEOTIDE SEQUENCE [MRNA]</scope>
    <scope>FUNCTION</scope>
    <scope>SUBCELLULAR LOCATION</scope>
    <scope>DEVELOPMENTAL STAGE</scope>
    <scope>DISRUPTION PHENOTYPE</scope>
    <source>
        <strain evidence="14">Bristol N2</strain>
    </source>
</reference>
<reference evidence="12" key="3">
    <citation type="journal article" date="2021" name="MicroPubl. Biol.">
        <title>Mutations in the cell-binding motif of lam-3/laminin alpha reveal hypercontraction behavior and defective sensitivity to levamisole in Caenorhabditis elegans.</title>
        <authorList>
            <person name="Wang L."/>
            <person name="Qiu Z."/>
            <person name="Lee M."/>
        </authorList>
    </citation>
    <scope>FUNCTION</scope>
    <scope>MUTAGENESIS OF 1462-ARG--ASP-1464 AND ASP-1464</scope>
</reference>
<dbReference type="EMBL" id="AF074902">
    <property type="protein sequence ID" value="AAC26793.1"/>
    <property type="molecule type" value="mRNA"/>
</dbReference>
<dbReference type="EMBL" id="BX284601">
    <property type="protein sequence ID" value="CAB03385.3"/>
    <property type="molecule type" value="Genomic_DNA"/>
</dbReference>
<dbReference type="PIR" id="F87908">
    <property type="entry name" value="F87908"/>
</dbReference>
<dbReference type="PIR" id="T23064">
    <property type="entry name" value="T23064"/>
</dbReference>
<dbReference type="PIR" id="T43291">
    <property type="entry name" value="T43291"/>
</dbReference>
<dbReference type="RefSeq" id="NP_492775.2">
    <property type="nucleotide sequence ID" value="NM_060374.4"/>
</dbReference>
<dbReference type="SMR" id="G5ECE3"/>
<dbReference type="FunCoup" id="G5ECE3">
    <property type="interactions" value="72"/>
</dbReference>
<dbReference type="STRING" id="6239.T22A3.8.1"/>
<dbReference type="PaxDb" id="6239-T22A3.8"/>
<dbReference type="PeptideAtlas" id="G5ECE3"/>
<dbReference type="EnsemblMetazoa" id="T22A3.8.1">
    <property type="protein sequence ID" value="T22A3.8.1"/>
    <property type="gene ID" value="WBGene00002248"/>
</dbReference>
<dbReference type="GeneID" id="172952"/>
<dbReference type="KEGG" id="cel:CELE_T22A3.8"/>
<dbReference type="AGR" id="WB:WBGene00002248"/>
<dbReference type="CTD" id="172952"/>
<dbReference type="WormBase" id="T22A3.8">
    <property type="protein sequence ID" value="CE31067"/>
    <property type="gene ID" value="WBGene00002248"/>
    <property type="gene designation" value="lam-3"/>
</dbReference>
<dbReference type="eggNOG" id="KOG1836">
    <property type="taxonomic scope" value="Eukaryota"/>
</dbReference>
<dbReference type="HOGENOM" id="CLU_000301_0_0_1"/>
<dbReference type="OMA" id="SHSRINF"/>
<dbReference type="OrthoDB" id="10011303at2759"/>
<dbReference type="PRO" id="PR:G5ECE3"/>
<dbReference type="Proteomes" id="UP000001940">
    <property type="component" value="Chromosome I"/>
</dbReference>
<dbReference type="Bgee" id="WBGene00002248">
    <property type="expression patterns" value="Expressed in pharyngeal muscle cell (C elegans) and 3 other cell types or tissues"/>
</dbReference>
<dbReference type="GO" id="GO:0005604">
    <property type="term" value="C:basement membrane"/>
    <property type="evidence" value="ECO:0000314"/>
    <property type="project" value="WormBase"/>
</dbReference>
<dbReference type="GO" id="GO:0005576">
    <property type="term" value="C:extracellular region"/>
    <property type="evidence" value="ECO:0007669"/>
    <property type="project" value="UniProtKB-SubCell"/>
</dbReference>
<dbReference type="GO" id="GO:0009887">
    <property type="term" value="P:animal organ morphogenesis"/>
    <property type="evidence" value="ECO:0000318"/>
    <property type="project" value="GO_Central"/>
</dbReference>
<dbReference type="GO" id="GO:0009888">
    <property type="term" value="P:tissue development"/>
    <property type="evidence" value="ECO:0000318"/>
    <property type="project" value="GO_Central"/>
</dbReference>
<dbReference type="CDD" id="cd00055">
    <property type="entry name" value="EGF_Lam"/>
    <property type="match status" value="16"/>
</dbReference>
<dbReference type="CDD" id="cd00110">
    <property type="entry name" value="LamG"/>
    <property type="match status" value="4"/>
</dbReference>
<dbReference type="FunFam" id="2.10.25.10:FF:000106">
    <property type="entry name" value="Heparan sulfate proteoglycan 2"/>
    <property type="match status" value="1"/>
</dbReference>
<dbReference type="FunFam" id="2.10.25.10:FF:000904">
    <property type="entry name" value="LAMinin related. See also lmb"/>
    <property type="match status" value="1"/>
</dbReference>
<dbReference type="FunFam" id="2.170.300.10:FF:000051">
    <property type="entry name" value="LAMinin related. See also lmb"/>
    <property type="match status" value="1"/>
</dbReference>
<dbReference type="FunFam" id="2.10.25.10:FF:000074">
    <property type="entry name" value="Laminin subunit alpha"/>
    <property type="match status" value="1"/>
</dbReference>
<dbReference type="FunFam" id="2.10.25.10:FF:000069">
    <property type="entry name" value="Laminin subunit alpha 1"/>
    <property type="match status" value="1"/>
</dbReference>
<dbReference type="FunFam" id="2.10.25.10:FF:000242">
    <property type="entry name" value="Laminin subunit alpha 1"/>
    <property type="match status" value="1"/>
</dbReference>
<dbReference type="FunFam" id="2.10.25.10:FF:000033">
    <property type="entry name" value="Laminin subunit alpha 2"/>
    <property type="match status" value="1"/>
</dbReference>
<dbReference type="FunFam" id="2.10.25.10:FF:000189">
    <property type="entry name" value="Laminin subunit alpha 2"/>
    <property type="match status" value="1"/>
</dbReference>
<dbReference type="FunFam" id="2.60.120.260:FF:000017">
    <property type="entry name" value="Laminin subunit alpha 2"/>
    <property type="match status" value="1"/>
</dbReference>
<dbReference type="FunFam" id="2.10.25.10:FF:000209">
    <property type="entry name" value="Laminin subunit alpha 5"/>
    <property type="match status" value="1"/>
</dbReference>
<dbReference type="FunFam" id="2.10.25.10:FF:000130">
    <property type="entry name" value="Laminin subunit beta 1"/>
    <property type="match status" value="1"/>
</dbReference>
<dbReference type="FunFam" id="2.10.25.10:FF:000067">
    <property type="entry name" value="Laminin subunit gamma 1"/>
    <property type="match status" value="1"/>
</dbReference>
<dbReference type="FunFam" id="2.10.25.10:FF:000974">
    <property type="entry name" value="Laminin subunit gamma-1"/>
    <property type="match status" value="1"/>
</dbReference>
<dbReference type="FunFam" id="2.10.25.10:FF:000580">
    <property type="entry name" value="Wing blister, isoform B"/>
    <property type="match status" value="1"/>
</dbReference>
<dbReference type="Gene3D" id="2.60.120.200">
    <property type="match status" value="4"/>
</dbReference>
<dbReference type="Gene3D" id="2.60.120.260">
    <property type="entry name" value="Galactose-binding domain-like"/>
    <property type="match status" value="1"/>
</dbReference>
<dbReference type="Gene3D" id="2.10.25.10">
    <property type="entry name" value="Laminin"/>
    <property type="match status" value="15"/>
</dbReference>
<dbReference type="Gene3D" id="2.170.300.10">
    <property type="entry name" value="Tie2 ligand-binding domain superfamily"/>
    <property type="match status" value="1"/>
</dbReference>
<dbReference type="InterPro" id="IPR013320">
    <property type="entry name" value="ConA-like_dom_sf"/>
</dbReference>
<dbReference type="InterPro" id="IPR000742">
    <property type="entry name" value="EGF-like_dom"/>
</dbReference>
<dbReference type="InterPro" id="IPR050440">
    <property type="entry name" value="Laminin/Netrin_ECM"/>
</dbReference>
<dbReference type="InterPro" id="IPR001791">
    <property type="entry name" value="Laminin_G"/>
</dbReference>
<dbReference type="InterPro" id="IPR000034">
    <property type="entry name" value="Laminin_IV"/>
</dbReference>
<dbReference type="InterPro" id="IPR008211">
    <property type="entry name" value="Laminin_N"/>
</dbReference>
<dbReference type="InterPro" id="IPR002049">
    <property type="entry name" value="LE_dom"/>
</dbReference>
<dbReference type="InterPro" id="IPR056863">
    <property type="entry name" value="LMN_ATRN_NET-like_EGF"/>
</dbReference>
<dbReference type="PANTHER" id="PTHR10574:SF444">
    <property type="entry name" value="BASEMENT MEMBRANE-SPECIFIC HEPARAN SULFATE PROTEOGLYCAN CORE PROTEIN"/>
    <property type="match status" value="1"/>
</dbReference>
<dbReference type="PANTHER" id="PTHR10574">
    <property type="entry name" value="NETRIN/LAMININ-RELATED"/>
    <property type="match status" value="1"/>
</dbReference>
<dbReference type="Pfam" id="PF00053">
    <property type="entry name" value="EGF_laminin"/>
    <property type="match status" value="16"/>
</dbReference>
<dbReference type="Pfam" id="PF24973">
    <property type="entry name" value="EGF_LMN_ATRN"/>
    <property type="match status" value="1"/>
</dbReference>
<dbReference type="Pfam" id="PF00052">
    <property type="entry name" value="Laminin_B"/>
    <property type="match status" value="2"/>
</dbReference>
<dbReference type="Pfam" id="PF00054">
    <property type="entry name" value="Laminin_G_1"/>
    <property type="match status" value="1"/>
</dbReference>
<dbReference type="Pfam" id="PF02210">
    <property type="entry name" value="Laminin_G_2"/>
    <property type="match status" value="2"/>
</dbReference>
<dbReference type="Pfam" id="PF00055">
    <property type="entry name" value="Laminin_N"/>
    <property type="match status" value="1"/>
</dbReference>
<dbReference type="PRINTS" id="PR00011">
    <property type="entry name" value="EGFLAMININ"/>
</dbReference>
<dbReference type="SMART" id="SM00181">
    <property type="entry name" value="EGF"/>
    <property type="match status" value="10"/>
</dbReference>
<dbReference type="SMART" id="SM00180">
    <property type="entry name" value="EGF_Lam"/>
    <property type="match status" value="17"/>
</dbReference>
<dbReference type="SMART" id="SM00281">
    <property type="entry name" value="LamB"/>
    <property type="match status" value="2"/>
</dbReference>
<dbReference type="SMART" id="SM00282">
    <property type="entry name" value="LamG"/>
    <property type="match status" value="4"/>
</dbReference>
<dbReference type="SMART" id="SM00136">
    <property type="entry name" value="LamNT"/>
    <property type="match status" value="1"/>
</dbReference>
<dbReference type="SUPFAM" id="SSF49899">
    <property type="entry name" value="Concanavalin A-like lectins/glucanases"/>
    <property type="match status" value="4"/>
</dbReference>
<dbReference type="SUPFAM" id="SSF57196">
    <property type="entry name" value="EGF/Laminin"/>
    <property type="match status" value="14"/>
</dbReference>
<dbReference type="PROSITE" id="PS00022">
    <property type="entry name" value="EGF_1"/>
    <property type="match status" value="12"/>
</dbReference>
<dbReference type="PROSITE" id="PS01186">
    <property type="entry name" value="EGF_2"/>
    <property type="match status" value="1"/>
</dbReference>
<dbReference type="PROSITE" id="PS01248">
    <property type="entry name" value="EGF_LAM_1"/>
    <property type="match status" value="14"/>
</dbReference>
<dbReference type="PROSITE" id="PS50027">
    <property type="entry name" value="EGF_LAM_2"/>
    <property type="match status" value="17"/>
</dbReference>
<dbReference type="PROSITE" id="PS50025">
    <property type="entry name" value="LAM_G_DOMAIN"/>
    <property type="match status" value="3"/>
</dbReference>
<dbReference type="PROSITE" id="PS51115">
    <property type="entry name" value="LAMININ_IVA"/>
    <property type="match status" value="2"/>
</dbReference>
<dbReference type="PROSITE" id="PS51117">
    <property type="entry name" value="LAMININ_NTER"/>
    <property type="match status" value="1"/>
</dbReference>
<gene>
    <name evidence="15 17" type="primary">lam-3</name>
    <name evidence="14" type="synonym">lama1/2</name>
    <name evidence="17" type="ORF">T22A3.8</name>
</gene>
<feature type="signal peptide" evidence="2">
    <location>
        <begin position="1"/>
        <end position="16"/>
    </location>
</feature>
<feature type="chain" id="PRO_5015091993" description="Laminin subunit alpha lam-3" evidence="2">
    <location>
        <begin position="17"/>
        <end position="3102"/>
    </location>
</feature>
<feature type="domain" description="Laminin N-terminal" evidence="6">
    <location>
        <begin position="44"/>
        <end position="295"/>
    </location>
</feature>
<feature type="domain" description="Laminin EGF-like 1" evidence="5">
    <location>
        <begin position="296"/>
        <end position="352"/>
    </location>
</feature>
<feature type="domain" description="Laminin EGF-like 2" evidence="5">
    <location>
        <begin position="353"/>
        <end position="422"/>
    </location>
</feature>
<feature type="domain" description="Laminin EGF-like 3" evidence="5">
    <location>
        <begin position="423"/>
        <end position="477"/>
    </location>
</feature>
<feature type="domain" description="Laminin EGF-like 4" evidence="5">
    <location>
        <begin position="478"/>
        <end position="527"/>
    </location>
</feature>
<feature type="domain" description="Laminin IV type A 1" evidence="4">
    <location>
        <begin position="548"/>
        <end position="740"/>
    </location>
</feature>
<feature type="domain" description="Laminin EGF-like 5" evidence="5">
    <location>
        <begin position="774"/>
        <end position="824"/>
    </location>
</feature>
<feature type="domain" description="Laminin EGF-like 6" evidence="5">
    <location>
        <begin position="825"/>
        <end position="888"/>
    </location>
</feature>
<feature type="domain" description="Laminin EGF-like 7" evidence="5">
    <location>
        <begin position="889"/>
        <end position="940"/>
    </location>
</feature>
<feature type="domain" description="Laminin EGF-like 8" evidence="5">
    <location>
        <begin position="941"/>
        <end position="987"/>
    </location>
</feature>
<feature type="domain" description="Laminin EGF-like 9" evidence="5">
    <location>
        <begin position="988"/>
        <end position="1035"/>
    </location>
</feature>
<feature type="domain" description="Laminin EGF-like 10" evidence="5">
    <location>
        <begin position="1036"/>
        <end position="1085"/>
    </location>
</feature>
<feature type="domain" description="Laminin EGF-like 11" evidence="5">
    <location>
        <begin position="1086"/>
        <end position="1133"/>
    </location>
</feature>
<feature type="domain" description="Laminin EGF-like 12" evidence="5">
    <location>
        <begin position="1134"/>
        <end position="1180"/>
    </location>
</feature>
<feature type="domain" description="Laminin EGF-like 13" evidence="5">
    <location>
        <begin position="1181"/>
        <end position="1226"/>
    </location>
</feature>
<feature type="domain" description="Laminin EGF-like 14" evidence="5">
    <location>
        <begin position="1227"/>
        <end position="1283"/>
    </location>
</feature>
<feature type="domain" description="Laminin IV type A 2" evidence="4">
    <location>
        <begin position="1295"/>
        <end position="1496"/>
    </location>
</feature>
<feature type="domain" description="Laminin EGF-like 15" evidence="5">
    <location>
        <begin position="1540"/>
        <end position="1589"/>
    </location>
</feature>
<feature type="domain" description="Laminin EGF-like 16" evidence="5">
    <location>
        <begin position="1590"/>
        <end position="1646"/>
    </location>
</feature>
<feature type="domain" description="Laminin EGF-like 17" evidence="5">
    <location>
        <begin position="1647"/>
        <end position="1693"/>
    </location>
</feature>
<feature type="domain" description="Laminin G-like 1" evidence="3">
    <location>
        <begin position="2467"/>
        <end position="2644"/>
    </location>
</feature>
<feature type="domain" description="Laminin G-like 2" evidence="3">
    <location>
        <begin position="2652"/>
        <end position="2839"/>
    </location>
</feature>
<feature type="domain" description="Laminin G-like 3" evidence="3">
    <location>
        <begin position="2913"/>
        <end position="3088"/>
    </location>
</feature>
<feature type="region of interest" description="Disordered" evidence="8">
    <location>
        <begin position="2061"/>
        <end position="2084"/>
    </location>
</feature>
<feature type="glycosylation site" description="N-linked (GlcNAc...) asparagine" evidence="7">
    <location>
        <position position="19"/>
    </location>
</feature>
<feature type="glycosylation site" description="N-linked (GlcNAc...) asparagine" evidence="7">
    <location>
        <position position="135"/>
    </location>
</feature>
<feature type="glycosylation site" description="N-linked (GlcNAc...) asparagine" evidence="7">
    <location>
        <position position="237"/>
    </location>
</feature>
<feature type="glycosylation site" description="N-linked (GlcNAc...) asparagine" evidence="7">
    <location>
        <position position="796"/>
    </location>
</feature>
<feature type="glycosylation site" description="N-linked (GlcNAc...) asparagine" evidence="7">
    <location>
        <position position="991"/>
    </location>
</feature>
<feature type="glycosylation site" description="N-linked (GlcNAc...) asparagine" evidence="7">
    <location>
        <position position="1027"/>
    </location>
</feature>
<feature type="glycosylation site" description="N-linked (GlcNAc...) asparagine" evidence="7">
    <location>
        <position position="1076"/>
    </location>
</feature>
<feature type="glycosylation site" description="N-linked (GlcNAc...) asparagine" evidence="7">
    <location>
        <position position="1164"/>
    </location>
</feature>
<feature type="glycosylation site" description="N-linked (GlcNAc...) asparagine" evidence="7">
    <location>
        <position position="1288"/>
    </location>
</feature>
<feature type="glycosylation site" description="N-linked (GlcNAc...) asparagine" evidence="7">
    <location>
        <position position="1717"/>
    </location>
</feature>
<feature type="glycosylation site" description="N-linked (GlcNAc...) asparagine" evidence="7">
    <location>
        <position position="1734"/>
    </location>
</feature>
<feature type="glycosylation site" description="N-linked (GlcNAc...) asparagine" evidence="7">
    <location>
        <position position="1777"/>
    </location>
</feature>
<feature type="glycosylation site" description="N-linked (GlcNAc...) asparagine" evidence="7">
    <location>
        <position position="1806"/>
    </location>
</feature>
<feature type="glycosylation site" description="N-linked (GlcNAc...) asparagine" evidence="7">
    <location>
        <position position="1839"/>
    </location>
</feature>
<feature type="glycosylation site" description="N-linked (GlcNAc...) asparagine" evidence="7">
    <location>
        <position position="1875"/>
    </location>
</feature>
<feature type="glycosylation site" description="N-linked (GlcNAc...) asparagine" evidence="7">
    <location>
        <position position="1969"/>
    </location>
</feature>
<feature type="glycosylation site" description="N-linked (GlcNAc...) asparagine" evidence="7">
    <location>
        <position position="1984"/>
    </location>
</feature>
<feature type="glycosylation site" description="N-linked (GlcNAc...) asparagine" evidence="7">
    <location>
        <position position="2048"/>
    </location>
</feature>
<feature type="glycosylation site" description="N-linked (GlcNAc...) asparagine" evidence="7">
    <location>
        <position position="2091"/>
    </location>
</feature>
<feature type="glycosylation site" description="N-linked (GlcNAc...) asparagine" evidence="7">
    <location>
        <position position="2193"/>
    </location>
</feature>
<feature type="glycosylation site" description="N-linked (GlcNAc...) asparagine" evidence="7">
    <location>
        <position position="2369"/>
    </location>
</feature>
<feature type="glycosylation site" description="N-linked (GlcNAc...) asparagine" evidence="7">
    <location>
        <position position="2479"/>
    </location>
</feature>
<feature type="glycosylation site" description="N-linked (GlcNAc...) asparagine" evidence="7">
    <location>
        <position position="2672"/>
    </location>
</feature>
<feature type="glycosylation site" description="N-linked (GlcNAc...) asparagine" evidence="7">
    <location>
        <position position="2686"/>
    </location>
</feature>
<feature type="glycosylation site" description="N-linked (GlcNAc...) asparagine" evidence="7">
    <location>
        <position position="2932"/>
    </location>
</feature>
<feature type="glycosylation site" description="N-linked (GlcNAc...) asparagine" evidence="7">
    <location>
        <position position="2959"/>
    </location>
</feature>
<feature type="glycosylation site" description="N-linked (GlcNAc...) asparagine" evidence="7">
    <location>
        <position position="3007"/>
    </location>
</feature>
<feature type="disulfide bond" evidence="5">
    <location>
        <begin position="296"/>
        <end position="305"/>
    </location>
</feature>
<feature type="disulfide bond" evidence="5">
    <location>
        <begin position="298"/>
        <end position="316"/>
    </location>
</feature>
<feature type="disulfide bond" evidence="5">
    <location>
        <begin position="318"/>
        <end position="327"/>
    </location>
</feature>
<feature type="disulfide bond" evidence="5">
    <location>
        <begin position="330"/>
        <end position="350"/>
    </location>
</feature>
<feature type="disulfide bond" evidence="5">
    <location>
        <begin position="353"/>
        <end position="362"/>
    </location>
</feature>
<feature type="disulfide bond" evidence="5">
    <location>
        <begin position="355"/>
        <end position="387"/>
    </location>
</feature>
<feature type="disulfide bond" evidence="5">
    <location>
        <begin position="390"/>
        <end position="399"/>
    </location>
</feature>
<feature type="disulfide bond" evidence="5">
    <location>
        <begin position="402"/>
        <end position="420"/>
    </location>
</feature>
<feature type="disulfide bond" evidence="5">
    <location>
        <begin position="423"/>
        <end position="435"/>
    </location>
</feature>
<feature type="disulfide bond" evidence="5">
    <location>
        <begin position="425"/>
        <end position="451"/>
    </location>
</feature>
<feature type="disulfide bond" evidence="5">
    <location>
        <begin position="453"/>
        <end position="462"/>
    </location>
</feature>
<feature type="disulfide bond" evidence="5">
    <location>
        <begin position="465"/>
        <end position="475"/>
    </location>
</feature>
<feature type="disulfide bond" evidence="5">
    <location>
        <begin position="478"/>
        <end position="491"/>
    </location>
</feature>
<feature type="disulfide bond" evidence="5">
    <location>
        <begin position="480"/>
        <end position="496"/>
    </location>
</feature>
<feature type="disulfide bond" evidence="5">
    <location>
        <begin position="498"/>
        <end position="507"/>
    </location>
</feature>
<feature type="disulfide bond" evidence="5">
    <location>
        <begin position="510"/>
        <end position="525"/>
    </location>
</feature>
<feature type="disulfide bond" evidence="5">
    <location>
        <begin position="774"/>
        <end position="783"/>
    </location>
</feature>
<feature type="disulfide bond" evidence="5">
    <location>
        <begin position="776"/>
        <end position="790"/>
    </location>
</feature>
<feature type="disulfide bond" evidence="5">
    <location>
        <begin position="793"/>
        <end position="802"/>
    </location>
</feature>
<feature type="disulfide bond" evidence="5">
    <location>
        <begin position="805"/>
        <end position="822"/>
    </location>
</feature>
<feature type="disulfide bond" evidence="5">
    <location>
        <begin position="825"/>
        <end position="838"/>
    </location>
</feature>
<feature type="disulfide bond" evidence="5">
    <location>
        <begin position="827"/>
        <end position="858"/>
    </location>
</feature>
<feature type="disulfide bond" evidence="5">
    <location>
        <begin position="861"/>
        <end position="870"/>
    </location>
</feature>
<feature type="disulfide bond" evidence="5">
    <location>
        <begin position="873"/>
        <end position="886"/>
    </location>
</feature>
<feature type="disulfide bond" evidence="5">
    <location>
        <begin position="889"/>
        <end position="903"/>
    </location>
</feature>
<feature type="disulfide bond" evidence="5">
    <location>
        <begin position="891"/>
        <end position="910"/>
    </location>
</feature>
<feature type="disulfide bond" evidence="5">
    <location>
        <begin position="913"/>
        <end position="922"/>
    </location>
</feature>
<feature type="disulfide bond" evidence="5">
    <location>
        <begin position="925"/>
        <end position="938"/>
    </location>
</feature>
<feature type="disulfide bond" evidence="5">
    <location>
        <begin position="941"/>
        <end position="953"/>
    </location>
</feature>
<feature type="disulfide bond" evidence="5">
    <location>
        <begin position="943"/>
        <end position="960"/>
    </location>
</feature>
<feature type="disulfide bond" evidence="5">
    <location>
        <begin position="962"/>
        <end position="971"/>
    </location>
</feature>
<feature type="disulfide bond" evidence="5">
    <location>
        <begin position="974"/>
        <end position="985"/>
    </location>
</feature>
<feature type="disulfide bond" evidence="5">
    <location>
        <begin position="988"/>
        <end position="1000"/>
    </location>
</feature>
<feature type="disulfide bond" evidence="5">
    <location>
        <begin position="990"/>
        <end position="1007"/>
    </location>
</feature>
<feature type="disulfide bond" evidence="5">
    <location>
        <begin position="1009"/>
        <end position="1018"/>
    </location>
</feature>
<feature type="disulfide bond" evidence="5">
    <location>
        <begin position="1021"/>
        <end position="1033"/>
    </location>
</feature>
<feature type="disulfide bond" evidence="5">
    <location>
        <begin position="1036"/>
        <end position="1049"/>
    </location>
</feature>
<feature type="disulfide bond" evidence="5">
    <location>
        <begin position="1038"/>
        <end position="1056"/>
    </location>
</feature>
<feature type="disulfide bond" evidence="5">
    <location>
        <begin position="1058"/>
        <end position="1067"/>
    </location>
</feature>
<feature type="disulfide bond" evidence="5">
    <location>
        <begin position="1070"/>
        <end position="1083"/>
    </location>
</feature>
<feature type="disulfide bond" evidence="5">
    <location>
        <begin position="1086"/>
        <end position="1098"/>
    </location>
</feature>
<feature type="disulfide bond" evidence="5">
    <location>
        <begin position="1088"/>
        <end position="1105"/>
    </location>
</feature>
<feature type="disulfide bond" evidence="5">
    <location>
        <begin position="1107"/>
        <end position="1116"/>
    </location>
</feature>
<feature type="disulfide bond" evidence="5">
    <location>
        <begin position="1119"/>
        <end position="1131"/>
    </location>
</feature>
<feature type="disulfide bond" evidence="5">
    <location>
        <begin position="1134"/>
        <end position="1144"/>
    </location>
</feature>
<feature type="disulfide bond" evidence="5">
    <location>
        <begin position="1137"/>
        <end position="1151"/>
    </location>
</feature>
<feature type="disulfide bond" evidence="5">
    <location>
        <begin position="1153"/>
        <end position="1162"/>
    </location>
</feature>
<feature type="disulfide bond" evidence="5">
    <location>
        <begin position="1165"/>
        <end position="1178"/>
    </location>
</feature>
<feature type="disulfide bond" evidence="5">
    <location>
        <begin position="1181"/>
        <end position="1193"/>
    </location>
</feature>
<feature type="disulfide bond" evidence="5">
    <location>
        <begin position="1183"/>
        <end position="1200"/>
    </location>
</feature>
<feature type="disulfide bond" evidence="5">
    <location>
        <begin position="1202"/>
        <end position="1211"/>
    </location>
</feature>
<feature type="disulfide bond" evidence="5">
    <location>
        <begin position="1214"/>
        <end position="1224"/>
    </location>
</feature>
<feature type="disulfide bond" evidence="5">
    <location>
        <begin position="1227"/>
        <end position="1246"/>
    </location>
</feature>
<feature type="disulfide bond" evidence="5">
    <location>
        <begin position="1229"/>
        <end position="1252"/>
    </location>
</feature>
<feature type="disulfide bond" evidence="5">
    <location>
        <begin position="1254"/>
        <end position="1263"/>
    </location>
</feature>
<feature type="disulfide bond" evidence="5">
    <location>
        <begin position="1266"/>
        <end position="1281"/>
    </location>
</feature>
<feature type="disulfide bond" evidence="5">
    <location>
        <begin position="1540"/>
        <end position="1549"/>
    </location>
</feature>
<feature type="disulfide bond" evidence="5">
    <location>
        <begin position="1542"/>
        <end position="1556"/>
    </location>
</feature>
<feature type="disulfide bond" evidence="5">
    <location>
        <begin position="1559"/>
        <end position="1568"/>
    </location>
</feature>
<feature type="disulfide bond" evidence="5">
    <location>
        <begin position="1571"/>
        <end position="1587"/>
    </location>
</feature>
<feature type="disulfide bond" evidence="5">
    <location>
        <begin position="1590"/>
        <end position="1603"/>
    </location>
</feature>
<feature type="disulfide bond" evidence="5">
    <location>
        <begin position="1592"/>
        <end position="1614"/>
    </location>
</feature>
<feature type="disulfide bond" evidence="5">
    <location>
        <begin position="1617"/>
        <end position="1626"/>
    </location>
</feature>
<feature type="disulfide bond" evidence="5">
    <location>
        <begin position="1629"/>
        <end position="1644"/>
    </location>
</feature>
<feature type="disulfide bond" evidence="5">
    <location>
        <begin position="1647"/>
        <end position="1659"/>
    </location>
</feature>
<feature type="disulfide bond" evidence="5">
    <location>
        <begin position="1649"/>
        <end position="1666"/>
    </location>
</feature>
<feature type="disulfide bond" evidence="5">
    <location>
        <begin position="1668"/>
        <end position="1677"/>
    </location>
</feature>
<feature type="disulfide bond" evidence="5">
    <location>
        <begin position="1680"/>
        <end position="1691"/>
    </location>
</feature>
<feature type="disulfide bond" evidence="3">
    <location>
        <begin position="2617"/>
        <end position="2644"/>
    </location>
</feature>
<feature type="disulfide bond" evidence="3">
    <location>
        <begin position="2814"/>
        <end position="2839"/>
    </location>
</feature>
<feature type="disulfide bond" evidence="3">
    <location>
        <begin position="3058"/>
        <end position="3088"/>
    </location>
</feature>
<feature type="mutagenesis site" description="In kq1461; increased swimming/thrashing behavior and increased hyper-contraction/overbending. Hypersensitivity to levamisole. Significant non-responsiveness to gentle touches." evidence="10">
    <location>
        <begin position="1462"/>
        <end position="1464"/>
    </location>
</feature>
<feature type="mutagenesis site" description="In kq1464; increased swimming/thrashing behavior and increased hyper-contraction/overbending. Resistance to levamisole. Significant non-responsiveness to gentle touches." evidence="10">
    <original>D</original>
    <variation>E</variation>
    <location>
        <position position="1464"/>
    </location>
</feature>
<comment type="function">
    <text evidence="1 9 10">Binding to cells via a high affinity receptor, laminin is thought to mediate the attachment, migration and organization of cells into tissues during embryonic development by interacting with other extracellular matrix components (By similarity). Required to assemble a stable basement membrane and for organizing receptor complexes and cytoskeletal components to the proper cell surfaces (PubMed:12783803). During embryogenesis, does not require the presence of collagen type IV in order to associate with cell surfaces, prior to assembly of the prototypical basement membrane (PubMed:12783803). Plays an important role in muscle contraction of the body (PubMed:34723150). Probably plays a distinct role from the related laminin subunit alpha epi-1 (PubMed:12783803).</text>
</comment>
<comment type="subunit">
    <text evidence="1">Laminin is a complex glycoprotein, consisting of three different polypeptide chains (alpha, beta, gamma), which are bound to each other by disulfide bonds into a cross-shaped molecule comprising one long and three short arms with globules at each end.</text>
</comment>
<comment type="subcellular location">
    <subcellularLocation>
        <location evidence="9">Secreted</location>
        <location evidence="9">Extracellular space</location>
        <location evidence="9">Extracellular matrix</location>
    </subcellularLocation>
    <subcellularLocation>
        <location evidence="9">Secreted</location>
        <location evidence="9">Extracellular space</location>
    </subcellularLocation>
    <subcellularLocation>
        <location evidence="9">Secreted</location>
    </subcellularLocation>
    <subcellularLocation>
        <location evidence="9">Secreted</location>
        <location evidence="9">Extracellular space</location>
        <location evidence="9">Extracellular matrix</location>
        <location evidence="9">Basement membrane</location>
    </subcellularLocation>
    <text evidence="9">May be localized to neuronal cell surfaces by specific receptors.</text>
</comment>
<comment type="developmental stage">
    <text evidence="9">First expressed between primary tissue layers near the end of gastrulation, at the 28-cell stage (at protein level) (PubMed:12783803). By the threefold stage of elongation, expression along the muscle quadrants declines and becomes restricted to a band at the center of each quadrant, which colocalizes with the dorsal and ventral sublateral nerve tracts in the adult (at protein level) (PubMed:12783803). High-level expression around the pharynx, pharyngeal intestinal valve, and intestine during morphogenesis (at protein level) (PubMed:12783803). In larvae and adults, expressed at high levels in the spermatheca and only weakly around the pharynx, the intestine and the excretory canal (at protein level) (PubMed:12783803). Expressed in the nervous system during elongation, and throughout the rest of development, at the nerve ring, a bundle of ~100 axons that encircles the outside of the pharynx, at the right fascicle of the ventral nerve cord and at the sublateral nerves (at protein level) (PubMed:12783803).</text>
</comment>
<comment type="disruption phenotype">
    <text evidence="9">Lacks detectable lam-3, but has no effect on tissue localization of laminin subunit alpha epi-1 (PubMed:12783803). Disrupted basement membrane integrity around pharynx in L1 stage larvae, causing structural disruption and abnormal localization of adherens junctions between pharyngeal cells (PubMed:12783803). RNAi-mediated knockdown causes arrest during early elongation or at the L1 larval stage (PubMed:12783803). L1 animals have abnormal pharyngeal development and have shorter bodies (posterior to the pharynx) at the time of arrest (PubMed:12783803). Simultaneous knockdown of laminin subunit alpha epi-1 increases likelihood of arrest during embryogenesis (PubMed:12783803).</text>
</comment>
<comment type="miscellaneous">
    <text evidence="9">Tissue-specific expression of the laminin alpha subunits lam-3 and epi-1 begins early, before or as organogenesis proceeds; furthermore, the tissue localization of the two alpha subunits are independent.</text>
</comment>